<name>CLCB_YERPE</name>
<proteinExistence type="inferred from homology"/>
<evidence type="ECO:0000255" key="1">
    <source>
        <dbReference type="HAMAP-Rule" id="MF_01203"/>
    </source>
</evidence>
<evidence type="ECO:0000305" key="2"/>
<protein>
    <recommendedName>
        <fullName evidence="1">Voltage-gated ClC-type chloride channel ClcB</fullName>
    </recommendedName>
</protein>
<gene>
    <name evidence="1" type="primary">clcB</name>
    <name type="ordered locus">YPO2270</name>
    <name type="ordered locus">y2112</name>
    <name type="ordered locus">YP_2066</name>
</gene>
<organism>
    <name type="scientific">Yersinia pestis</name>
    <dbReference type="NCBI Taxonomy" id="632"/>
    <lineage>
        <taxon>Bacteria</taxon>
        <taxon>Pseudomonadati</taxon>
        <taxon>Pseudomonadota</taxon>
        <taxon>Gammaproteobacteria</taxon>
        <taxon>Enterobacterales</taxon>
        <taxon>Yersiniaceae</taxon>
        <taxon>Yersinia</taxon>
    </lineage>
</organism>
<accession>Q8ZEB3</accession>
<accession>Q0WEQ2</accession>
<comment type="function">
    <text evidence="1">Probably acts as an electrical shunt for an outwardly-directed proton pump that is linked to amino acid decarboxylation, as part of the extreme acid resistance (XAR) response.</text>
</comment>
<comment type="subcellular location">
    <subcellularLocation>
        <location evidence="1">Cell inner membrane</location>
        <topology evidence="1">Multi-pass membrane protein</topology>
    </subcellularLocation>
</comment>
<comment type="similarity">
    <text evidence="1">Belongs to the chloride channel (TC 2.A.49) family. ClcB subfamily.</text>
</comment>
<comment type="sequence caution" evidence="2">
    <conflict type="erroneous initiation">
        <sequence resource="EMBL-CDS" id="AAM85675"/>
    </conflict>
</comment>
<comment type="sequence caution" evidence="2">
    <conflict type="erroneous initiation">
        <sequence resource="EMBL-CDS" id="AAS62278"/>
    </conflict>
</comment>
<comment type="sequence caution" evidence="2">
    <conflict type="erroneous initiation">
        <sequence resource="EMBL-CDS" id="CAL20897"/>
    </conflict>
</comment>
<sequence>MLRRLVISIMLGMVSALIVWLFHQAMLGLEWLLFSRTDGSLVAAAASITGWRRALTPALGGLAAGLLLWAYQRYQHRKPSAPTDYMEAIEIGDGRLDVSASLVKSLASLLVVSSGSAIGREGAMVLLAALFASVFAQRYAKPKEWKLWVACGAAAGMASAYHAPLAGSLFIAEILFGTLMLASLGPVVIAAVSALLTINLLQGGQETLYQVQTLPSPWPVQYFLMALLGLMAGFSGPLFLKAMAASSHAFRSLNLLPPLQLALGGIIVGLLSLIFPEVWGNGYSVVQSLLTTPPGVLLIGGILICKLLAVLASSGSGAPGGVFTPTLFVGAALGMLCGQIFSLWPVLGDNIGLLMALTGMATLLAATTHAPIMAALMVCEMTGEYTLLPGLLLSCVIATTIARWLRPISVYRSH</sequence>
<reference key="1">
    <citation type="journal article" date="2001" name="Nature">
        <title>Genome sequence of Yersinia pestis, the causative agent of plague.</title>
        <authorList>
            <person name="Parkhill J."/>
            <person name="Wren B.W."/>
            <person name="Thomson N.R."/>
            <person name="Titball R.W."/>
            <person name="Holden M.T.G."/>
            <person name="Prentice M.B."/>
            <person name="Sebaihia M."/>
            <person name="James K.D."/>
            <person name="Churcher C.M."/>
            <person name="Mungall K.L."/>
            <person name="Baker S."/>
            <person name="Basham D."/>
            <person name="Bentley S.D."/>
            <person name="Brooks K."/>
            <person name="Cerdeno-Tarraga A.-M."/>
            <person name="Chillingworth T."/>
            <person name="Cronin A."/>
            <person name="Davies R.M."/>
            <person name="Davis P."/>
            <person name="Dougan G."/>
            <person name="Feltwell T."/>
            <person name="Hamlin N."/>
            <person name="Holroyd S."/>
            <person name="Jagels K."/>
            <person name="Karlyshev A.V."/>
            <person name="Leather S."/>
            <person name="Moule S."/>
            <person name="Oyston P.C.F."/>
            <person name="Quail M.A."/>
            <person name="Rutherford K.M."/>
            <person name="Simmonds M."/>
            <person name="Skelton J."/>
            <person name="Stevens K."/>
            <person name="Whitehead S."/>
            <person name="Barrell B.G."/>
        </authorList>
    </citation>
    <scope>NUCLEOTIDE SEQUENCE [LARGE SCALE GENOMIC DNA]</scope>
    <source>
        <strain>CO-92 / Biovar Orientalis</strain>
    </source>
</reference>
<reference key="2">
    <citation type="journal article" date="2002" name="J. Bacteriol.">
        <title>Genome sequence of Yersinia pestis KIM.</title>
        <authorList>
            <person name="Deng W."/>
            <person name="Burland V."/>
            <person name="Plunkett G. III"/>
            <person name="Boutin A."/>
            <person name="Mayhew G.F."/>
            <person name="Liss P."/>
            <person name="Perna N.T."/>
            <person name="Rose D.J."/>
            <person name="Mau B."/>
            <person name="Zhou S."/>
            <person name="Schwartz D.C."/>
            <person name="Fetherston J.D."/>
            <person name="Lindler L.E."/>
            <person name="Brubaker R.R."/>
            <person name="Plano G.V."/>
            <person name="Straley S.C."/>
            <person name="McDonough K.A."/>
            <person name="Nilles M.L."/>
            <person name="Matson J.S."/>
            <person name="Blattner F.R."/>
            <person name="Perry R.D."/>
        </authorList>
    </citation>
    <scope>NUCLEOTIDE SEQUENCE [LARGE SCALE GENOMIC DNA]</scope>
    <source>
        <strain>KIM10+ / Biovar Mediaevalis</strain>
    </source>
</reference>
<reference key="3">
    <citation type="journal article" date="2004" name="DNA Res.">
        <title>Complete genome sequence of Yersinia pestis strain 91001, an isolate avirulent to humans.</title>
        <authorList>
            <person name="Song Y."/>
            <person name="Tong Z."/>
            <person name="Wang J."/>
            <person name="Wang L."/>
            <person name="Guo Z."/>
            <person name="Han Y."/>
            <person name="Zhang J."/>
            <person name="Pei D."/>
            <person name="Zhou D."/>
            <person name="Qin H."/>
            <person name="Pang X."/>
            <person name="Han Y."/>
            <person name="Zhai J."/>
            <person name="Li M."/>
            <person name="Cui B."/>
            <person name="Qi Z."/>
            <person name="Jin L."/>
            <person name="Dai R."/>
            <person name="Chen F."/>
            <person name="Li S."/>
            <person name="Ye C."/>
            <person name="Du Z."/>
            <person name="Lin W."/>
            <person name="Wang J."/>
            <person name="Yu J."/>
            <person name="Yang H."/>
            <person name="Wang J."/>
            <person name="Huang P."/>
            <person name="Yang R."/>
        </authorList>
    </citation>
    <scope>NUCLEOTIDE SEQUENCE [LARGE SCALE GENOMIC DNA]</scope>
    <source>
        <strain>91001 / Biovar Mediaevalis</strain>
    </source>
</reference>
<dbReference type="EMBL" id="AL590842">
    <property type="protein sequence ID" value="CAL20897.1"/>
    <property type="status" value="ALT_INIT"/>
    <property type="molecule type" value="Genomic_DNA"/>
</dbReference>
<dbReference type="EMBL" id="AE009952">
    <property type="protein sequence ID" value="AAM85675.1"/>
    <property type="status" value="ALT_INIT"/>
    <property type="molecule type" value="Genomic_DNA"/>
</dbReference>
<dbReference type="EMBL" id="AE017042">
    <property type="protein sequence ID" value="AAS62278.1"/>
    <property type="status" value="ALT_INIT"/>
    <property type="molecule type" value="Genomic_DNA"/>
</dbReference>
<dbReference type="PIR" id="AF0276">
    <property type="entry name" value="AF0276"/>
</dbReference>
<dbReference type="SMR" id="Q8ZEB3"/>
<dbReference type="PaxDb" id="214092-YPO2270"/>
<dbReference type="EnsemblBacteria" id="AAS62278">
    <property type="protein sequence ID" value="AAS62278"/>
    <property type="gene ID" value="YP_2066"/>
</dbReference>
<dbReference type="KEGG" id="ype:YPO2270"/>
<dbReference type="KEGG" id="ypj:CH55_361"/>
<dbReference type="KEGG" id="ypk:y2112"/>
<dbReference type="KEGG" id="ypl:CH46_2843"/>
<dbReference type="KEGG" id="ypm:YP_2066"/>
<dbReference type="KEGG" id="ypv:BZ15_1270"/>
<dbReference type="KEGG" id="ypw:CH59_3846"/>
<dbReference type="PATRIC" id="fig|632.151.peg.1239"/>
<dbReference type="eggNOG" id="COG0038">
    <property type="taxonomic scope" value="Bacteria"/>
</dbReference>
<dbReference type="HOGENOM" id="CLU_015263_5_2_6"/>
<dbReference type="OMA" id="VIFVMEV"/>
<dbReference type="Proteomes" id="UP000000815">
    <property type="component" value="Chromosome"/>
</dbReference>
<dbReference type="Proteomes" id="UP000001019">
    <property type="component" value="Chromosome"/>
</dbReference>
<dbReference type="Proteomes" id="UP000002490">
    <property type="component" value="Chromosome"/>
</dbReference>
<dbReference type="GO" id="GO:0034707">
    <property type="term" value="C:chloride channel complex"/>
    <property type="evidence" value="ECO:0007669"/>
    <property type="project" value="UniProtKB-KW"/>
</dbReference>
<dbReference type="GO" id="GO:0005886">
    <property type="term" value="C:plasma membrane"/>
    <property type="evidence" value="ECO:0000318"/>
    <property type="project" value="GO_Central"/>
</dbReference>
<dbReference type="GO" id="GO:0005247">
    <property type="term" value="F:voltage-gated chloride channel activity"/>
    <property type="evidence" value="ECO:0007669"/>
    <property type="project" value="UniProtKB-UniRule"/>
</dbReference>
<dbReference type="GO" id="GO:0010447">
    <property type="term" value="P:response to acidic pH"/>
    <property type="evidence" value="ECO:0007669"/>
    <property type="project" value="InterPro"/>
</dbReference>
<dbReference type="CDD" id="cd00400">
    <property type="entry name" value="Voltage_gated_ClC"/>
    <property type="match status" value="1"/>
</dbReference>
<dbReference type="FunFam" id="1.10.3080.10:FF:000010">
    <property type="entry name" value="Voltage-gated ClC-type chloride channel ClcB"/>
    <property type="match status" value="1"/>
</dbReference>
<dbReference type="Gene3D" id="1.10.3080.10">
    <property type="entry name" value="Clc chloride channel"/>
    <property type="match status" value="1"/>
</dbReference>
<dbReference type="HAMAP" id="MF_01203">
    <property type="entry name" value="CLC_ClcB"/>
    <property type="match status" value="1"/>
</dbReference>
<dbReference type="InterPro" id="IPR014743">
    <property type="entry name" value="Cl-channel_core"/>
</dbReference>
<dbReference type="InterPro" id="IPR023790">
    <property type="entry name" value="Cl-channel_volt-gated_ClcB"/>
</dbReference>
<dbReference type="InterPro" id="IPR001807">
    <property type="entry name" value="ClC"/>
</dbReference>
<dbReference type="InterPro" id="IPR050368">
    <property type="entry name" value="ClC-type_chloride_channel"/>
</dbReference>
<dbReference type="NCBIfam" id="NF002437">
    <property type="entry name" value="PRK01610.1"/>
    <property type="match status" value="1"/>
</dbReference>
<dbReference type="PANTHER" id="PTHR43427">
    <property type="entry name" value="CHLORIDE CHANNEL PROTEIN CLC-E"/>
    <property type="match status" value="1"/>
</dbReference>
<dbReference type="PANTHER" id="PTHR43427:SF6">
    <property type="entry name" value="CHLORIDE CHANNEL PROTEIN CLC-E"/>
    <property type="match status" value="1"/>
</dbReference>
<dbReference type="Pfam" id="PF00654">
    <property type="entry name" value="Voltage_CLC"/>
    <property type="match status" value="1"/>
</dbReference>
<dbReference type="PRINTS" id="PR00762">
    <property type="entry name" value="CLCHANNEL"/>
</dbReference>
<dbReference type="SUPFAM" id="SSF81340">
    <property type="entry name" value="Clc chloride channel"/>
    <property type="match status" value="1"/>
</dbReference>
<keyword id="KW-0997">Cell inner membrane</keyword>
<keyword id="KW-1003">Cell membrane</keyword>
<keyword id="KW-0868">Chloride</keyword>
<keyword id="KW-0869">Chloride channel</keyword>
<keyword id="KW-0407">Ion channel</keyword>
<keyword id="KW-0406">Ion transport</keyword>
<keyword id="KW-0472">Membrane</keyword>
<keyword id="KW-1185">Reference proteome</keyword>
<keyword id="KW-0812">Transmembrane</keyword>
<keyword id="KW-1133">Transmembrane helix</keyword>
<keyword id="KW-0813">Transport</keyword>
<keyword id="KW-0851">Voltage-gated channel</keyword>
<feature type="chain" id="PRO_0000094491" description="Voltage-gated ClC-type chloride channel ClcB">
    <location>
        <begin position="1"/>
        <end position="414"/>
    </location>
</feature>
<feature type="transmembrane region" description="Helical" evidence="1">
    <location>
        <begin position="5"/>
        <end position="25"/>
    </location>
</feature>
<feature type="transmembrane region" description="Helical" evidence="1">
    <location>
        <begin position="54"/>
        <end position="74"/>
    </location>
</feature>
<feature type="transmembrane region" description="Helical" evidence="1">
    <location>
        <begin position="116"/>
        <end position="136"/>
    </location>
</feature>
<feature type="transmembrane region" description="Helical" evidence="1">
    <location>
        <begin position="147"/>
        <end position="167"/>
    </location>
</feature>
<feature type="transmembrane region" description="Helical" evidence="1">
    <location>
        <begin position="169"/>
        <end position="189"/>
    </location>
</feature>
<feature type="transmembrane region" description="Helical" evidence="1">
    <location>
        <begin position="220"/>
        <end position="240"/>
    </location>
</feature>
<feature type="transmembrane region" description="Helical" evidence="1">
    <location>
        <begin position="255"/>
        <end position="275"/>
    </location>
</feature>
<feature type="transmembrane region" description="Helical" evidence="1">
    <location>
        <begin position="292"/>
        <end position="312"/>
    </location>
</feature>
<feature type="transmembrane region" description="Helical" evidence="1">
    <location>
        <begin position="327"/>
        <end position="347"/>
    </location>
</feature>
<feature type="transmembrane region" description="Helical" evidence="1">
    <location>
        <begin position="353"/>
        <end position="373"/>
    </location>
</feature>
<feature type="transmembrane region" description="Helical" evidence="1">
    <location>
        <begin position="381"/>
        <end position="401"/>
    </location>
</feature>